<feature type="initiator methionine" description="Removed" evidence="3">
    <location>
        <position position="1"/>
    </location>
</feature>
<feature type="chain" id="PRO_0000389298" description="Small ribosomal subunit protein eS1B">
    <location>
        <begin position="2"/>
        <end position="264"/>
    </location>
</feature>
<feature type="region of interest" description="Disordered" evidence="4">
    <location>
        <begin position="233"/>
        <end position="264"/>
    </location>
</feature>
<feature type="compositionally biased region" description="Basic and acidic residues" evidence="4">
    <location>
        <begin position="242"/>
        <end position="255"/>
    </location>
</feature>
<evidence type="ECO:0000250" key="1">
    <source>
        <dbReference type="UniProtKB" id="P61247"/>
    </source>
</evidence>
<evidence type="ECO:0000250" key="2">
    <source>
        <dbReference type="UniProtKB" id="P97351"/>
    </source>
</evidence>
<evidence type="ECO:0000255" key="3">
    <source>
        <dbReference type="HAMAP-Rule" id="MF_03122"/>
    </source>
</evidence>
<evidence type="ECO:0000256" key="4">
    <source>
        <dbReference type="SAM" id="MobiDB-lite"/>
    </source>
</evidence>
<evidence type="ECO:0000305" key="5"/>
<gene>
    <name type="primary">rps3a-b</name>
</gene>
<name>RS3AB_XENLA</name>
<dbReference type="EMBL" id="BC153786">
    <property type="protein sequence ID" value="AAI53787.1"/>
    <property type="molecule type" value="mRNA"/>
</dbReference>
<dbReference type="RefSeq" id="NP_001104210.1">
    <property type="nucleotide sequence ID" value="NM_001110740.1"/>
</dbReference>
<dbReference type="SMR" id="A8E604"/>
<dbReference type="BioGRID" id="674804">
    <property type="interactions" value="1"/>
</dbReference>
<dbReference type="DNASU" id="100126639"/>
<dbReference type="GeneID" id="100126639"/>
<dbReference type="KEGG" id="xla:100126639"/>
<dbReference type="AGR" id="Xenbase:XB-GENE-6253799"/>
<dbReference type="CTD" id="100126639"/>
<dbReference type="Xenbase" id="XB-GENE-6253799">
    <property type="gene designation" value="rps3a.L"/>
</dbReference>
<dbReference type="OMA" id="MHNDESD"/>
<dbReference type="OrthoDB" id="9834376at2759"/>
<dbReference type="Proteomes" id="UP000186698">
    <property type="component" value="Chromosome 1L"/>
</dbReference>
<dbReference type="Bgee" id="100126639">
    <property type="expression patterns" value="Expressed in lung and 19 other cell types or tissues"/>
</dbReference>
<dbReference type="GO" id="GO:0005829">
    <property type="term" value="C:cytosol"/>
    <property type="evidence" value="ECO:0000318"/>
    <property type="project" value="GO_Central"/>
</dbReference>
<dbReference type="GO" id="GO:0022627">
    <property type="term" value="C:cytosolic small ribosomal subunit"/>
    <property type="evidence" value="ECO:0007669"/>
    <property type="project" value="UniProtKB-UniRule"/>
</dbReference>
<dbReference type="GO" id="GO:0005730">
    <property type="term" value="C:nucleolus"/>
    <property type="evidence" value="ECO:0007669"/>
    <property type="project" value="UniProtKB-SubCell"/>
</dbReference>
<dbReference type="GO" id="GO:0032040">
    <property type="term" value="C:small-subunit processome"/>
    <property type="evidence" value="ECO:0000250"/>
    <property type="project" value="UniProtKB"/>
</dbReference>
<dbReference type="GO" id="GO:0003735">
    <property type="term" value="F:structural constituent of ribosome"/>
    <property type="evidence" value="ECO:0007669"/>
    <property type="project" value="UniProtKB-UniRule"/>
</dbReference>
<dbReference type="GO" id="GO:0042274">
    <property type="term" value="P:ribosomal small subunit biogenesis"/>
    <property type="evidence" value="ECO:0000250"/>
    <property type="project" value="UniProtKB"/>
</dbReference>
<dbReference type="GO" id="GO:0006412">
    <property type="term" value="P:translation"/>
    <property type="evidence" value="ECO:0007669"/>
    <property type="project" value="UniProtKB-UniRule"/>
</dbReference>
<dbReference type="HAMAP" id="MF_03122">
    <property type="entry name" value="Ribosomal_eS1_euk"/>
    <property type="match status" value="1"/>
</dbReference>
<dbReference type="InterPro" id="IPR001593">
    <property type="entry name" value="Ribosomal_eS1"/>
</dbReference>
<dbReference type="InterPro" id="IPR018281">
    <property type="entry name" value="Ribosomal_eS1_CS"/>
</dbReference>
<dbReference type="InterPro" id="IPR027500">
    <property type="entry name" value="Ribosomal_eS1_euk"/>
</dbReference>
<dbReference type="PANTHER" id="PTHR11830">
    <property type="entry name" value="40S RIBOSOMAL PROTEIN S3A"/>
    <property type="match status" value="1"/>
</dbReference>
<dbReference type="Pfam" id="PF01015">
    <property type="entry name" value="Ribosomal_S3Ae"/>
    <property type="match status" value="1"/>
</dbReference>
<dbReference type="SMART" id="SM01397">
    <property type="entry name" value="Ribosomal_S3Ae"/>
    <property type="match status" value="1"/>
</dbReference>
<dbReference type="PROSITE" id="PS01191">
    <property type="entry name" value="RIBOSOMAL_S3AE"/>
    <property type="match status" value="1"/>
</dbReference>
<keyword id="KW-0963">Cytoplasm</keyword>
<keyword id="KW-0539">Nucleus</keyword>
<keyword id="KW-1185">Reference proteome</keyword>
<keyword id="KW-0687">Ribonucleoprotein</keyword>
<keyword id="KW-0689">Ribosomal protein</keyword>
<comment type="function">
    <text evidence="1 3">Component of the small ribosomal subunit. The ribosome is a large ribonucleoprotein complex responsible for the synthesis of proteins in the cell. Part of the small subunit (SSU) processome, first precursor of the small eukaryotic ribosomal subunit. During the assembly of the SSU processome in the nucleolus, many ribosome biogenesis factors, an RNA chaperone and ribosomal proteins associate with the nascent pre-rRNA and work in concert to generate RNA folding, modifications, rearrangements and cleavage as well as targeted degradation of pre-ribosomal RNA by the RNA exosome (By similarity). May play a role during erythropoiesis (By similarity).</text>
</comment>
<comment type="subunit">
    <text evidence="1">Component of the small ribosomal subunit. Mature ribosomes consist of a small (40S) and a large (60S) subunit. The 40S subunit contains about 33 different proteins and 1 molecule of RNA (18S). The 60S subunit contains about 49 different proteins and 3 molecules of RNA (28S, 5.8S and 5S). Part of the small subunit (SSU) processome, composed of more than 70 proteins and the RNA chaperone small nucleolar RNA (snoRNA) U3.</text>
</comment>
<comment type="subcellular location">
    <subcellularLocation>
        <location evidence="2 3">Cytoplasm</location>
    </subcellularLocation>
    <subcellularLocation>
        <location evidence="2 3">Nucleus</location>
    </subcellularLocation>
    <subcellularLocation>
        <location evidence="1">Nucleus</location>
        <location evidence="1">Nucleolus</location>
    </subcellularLocation>
</comment>
<comment type="similarity">
    <text evidence="3">Belongs to the eukaryotic ribosomal protein eS1 family.</text>
</comment>
<protein>
    <recommendedName>
        <fullName evidence="3">Small ribosomal subunit protein eS1B</fullName>
    </recommendedName>
    <alternativeName>
        <fullName evidence="5">40S ribosomal protein S3a-B</fullName>
    </alternativeName>
</protein>
<proteinExistence type="evidence at transcript level"/>
<accession>A8E604</accession>
<organism>
    <name type="scientific">Xenopus laevis</name>
    <name type="common">African clawed frog</name>
    <dbReference type="NCBI Taxonomy" id="8355"/>
    <lineage>
        <taxon>Eukaryota</taxon>
        <taxon>Metazoa</taxon>
        <taxon>Chordata</taxon>
        <taxon>Craniata</taxon>
        <taxon>Vertebrata</taxon>
        <taxon>Euteleostomi</taxon>
        <taxon>Amphibia</taxon>
        <taxon>Batrachia</taxon>
        <taxon>Anura</taxon>
        <taxon>Pipoidea</taxon>
        <taxon>Pipidae</taxon>
        <taxon>Xenopodinae</taxon>
        <taxon>Xenopus</taxon>
        <taxon>Xenopus</taxon>
    </lineage>
</organism>
<sequence>MAVGKNKRLTKGGKKGAKKKIVDPFSKKDWYDVKAPAMFNIRNLGKTLVTRTQGTKIASDGLKGRVFEVSLADLQNDEVAFRKFKLITEDVQGKNCLTNFHGMDLTRDKMCSMVKKWQTMIEAHVDVKTTDGYLLRLFCVGFTKKRNNQIRKTSYAQHQQVRQIRKKMMEIMSREVQTNDLKEVVNKLIPDSIGKDIEKACQSIYPLHDVYARKVKMLKKPKFELGKLMELHGEGGGSGKPAADETGAKVERADGYEPPVQESV</sequence>
<reference key="1">
    <citation type="submission" date="2007-09" db="EMBL/GenBank/DDBJ databases">
        <authorList>
            <consortium name="NIH - Xenopus Gene Collection (XGC) project"/>
        </authorList>
    </citation>
    <scope>NUCLEOTIDE SEQUENCE [LARGE SCALE MRNA]</scope>
    <source>
        <tissue>Hind limb</tissue>
    </source>
</reference>